<organism>
    <name type="scientific">Bothrops pauloensis</name>
    <name type="common">Neuwied's lancehead</name>
    <name type="synonym">Bothrops neuwiedi pauloensis</name>
    <dbReference type="NCBI Taxonomy" id="1042543"/>
    <lineage>
        <taxon>Eukaryota</taxon>
        <taxon>Metazoa</taxon>
        <taxon>Chordata</taxon>
        <taxon>Craniata</taxon>
        <taxon>Vertebrata</taxon>
        <taxon>Euteleostomi</taxon>
        <taxon>Lepidosauria</taxon>
        <taxon>Squamata</taxon>
        <taxon>Bifurcata</taxon>
        <taxon>Unidentata</taxon>
        <taxon>Episquamata</taxon>
        <taxon>Toxicofera</taxon>
        <taxon>Serpentes</taxon>
        <taxon>Colubroidea</taxon>
        <taxon>Viperidae</taxon>
        <taxon>Crotalinae</taxon>
        <taxon>Bothrops</taxon>
    </lineage>
</organism>
<sequence>MRTLWIMAVLLVGVEGNLVQFETLIMKIAGRSGVWYYGSYGCYCGSGGQGRPQDASDRCCFVHDCCYGKVTDCDPKADVYTYSEENGVVVCGGDDPCKKQICEVRQGCGNLLPRHKDTYEHNILVFPAKTFAKKESEPC</sequence>
<dbReference type="EC" id="3.1.1.4"/>
<dbReference type="EMBL" id="GQ850458">
    <property type="protein sequence ID" value="ACX71493.1"/>
    <property type="molecule type" value="mRNA"/>
</dbReference>
<dbReference type="SMR" id="D0UGJ0"/>
<dbReference type="GO" id="GO:0005576">
    <property type="term" value="C:extracellular region"/>
    <property type="evidence" value="ECO:0007669"/>
    <property type="project" value="UniProtKB-SubCell"/>
</dbReference>
<dbReference type="GO" id="GO:0005509">
    <property type="term" value="F:calcium ion binding"/>
    <property type="evidence" value="ECO:0007669"/>
    <property type="project" value="InterPro"/>
</dbReference>
<dbReference type="GO" id="GO:0047498">
    <property type="term" value="F:calcium-dependent phospholipase A2 activity"/>
    <property type="evidence" value="ECO:0007669"/>
    <property type="project" value="TreeGrafter"/>
</dbReference>
<dbReference type="GO" id="GO:0005543">
    <property type="term" value="F:phospholipid binding"/>
    <property type="evidence" value="ECO:0007669"/>
    <property type="project" value="TreeGrafter"/>
</dbReference>
<dbReference type="GO" id="GO:0090729">
    <property type="term" value="F:toxin activity"/>
    <property type="evidence" value="ECO:0007669"/>
    <property type="project" value="UniProtKB-KW"/>
</dbReference>
<dbReference type="GO" id="GO:0050482">
    <property type="term" value="P:arachidonate secretion"/>
    <property type="evidence" value="ECO:0007669"/>
    <property type="project" value="InterPro"/>
</dbReference>
<dbReference type="GO" id="GO:0016042">
    <property type="term" value="P:lipid catabolic process"/>
    <property type="evidence" value="ECO:0007669"/>
    <property type="project" value="UniProtKB-KW"/>
</dbReference>
<dbReference type="GO" id="GO:0042130">
    <property type="term" value="P:negative regulation of T cell proliferation"/>
    <property type="evidence" value="ECO:0007669"/>
    <property type="project" value="TreeGrafter"/>
</dbReference>
<dbReference type="GO" id="GO:0006644">
    <property type="term" value="P:phospholipid metabolic process"/>
    <property type="evidence" value="ECO:0007669"/>
    <property type="project" value="InterPro"/>
</dbReference>
<dbReference type="CDD" id="cd00125">
    <property type="entry name" value="PLA2c"/>
    <property type="match status" value="1"/>
</dbReference>
<dbReference type="FunFam" id="1.20.90.10:FF:000001">
    <property type="entry name" value="Basic phospholipase A2 homolog"/>
    <property type="match status" value="1"/>
</dbReference>
<dbReference type="Gene3D" id="1.20.90.10">
    <property type="entry name" value="Phospholipase A2 domain"/>
    <property type="match status" value="1"/>
</dbReference>
<dbReference type="InterPro" id="IPR001211">
    <property type="entry name" value="PLipase_A2"/>
</dbReference>
<dbReference type="InterPro" id="IPR016090">
    <property type="entry name" value="PLipase_A2_dom"/>
</dbReference>
<dbReference type="InterPro" id="IPR036444">
    <property type="entry name" value="PLipase_A2_dom_sf"/>
</dbReference>
<dbReference type="InterPro" id="IPR033113">
    <property type="entry name" value="PLipase_A2_His_AS"/>
</dbReference>
<dbReference type="PANTHER" id="PTHR11716">
    <property type="entry name" value="PHOSPHOLIPASE A2 FAMILY MEMBER"/>
    <property type="match status" value="1"/>
</dbReference>
<dbReference type="PANTHER" id="PTHR11716:SF9">
    <property type="entry name" value="PHOSPHOLIPASE A2, MEMBRANE ASSOCIATED"/>
    <property type="match status" value="1"/>
</dbReference>
<dbReference type="Pfam" id="PF00068">
    <property type="entry name" value="Phospholip_A2_1"/>
    <property type="match status" value="1"/>
</dbReference>
<dbReference type="PRINTS" id="PR00389">
    <property type="entry name" value="PHPHLIPASEA2"/>
</dbReference>
<dbReference type="SMART" id="SM00085">
    <property type="entry name" value="PA2c"/>
    <property type="match status" value="1"/>
</dbReference>
<dbReference type="SUPFAM" id="SSF48619">
    <property type="entry name" value="Phospholipase A2, PLA2"/>
    <property type="match status" value="1"/>
</dbReference>
<dbReference type="PROSITE" id="PS00118">
    <property type="entry name" value="PA2_HIS"/>
    <property type="match status" value="1"/>
</dbReference>
<keyword id="KW-0106">Calcium</keyword>
<keyword id="KW-0903">Direct protein sequencing</keyword>
<keyword id="KW-1015">Disulfide bond</keyword>
<keyword id="KW-0378">Hydrolase</keyword>
<keyword id="KW-0442">Lipid degradation</keyword>
<keyword id="KW-0443">Lipid metabolism</keyword>
<keyword id="KW-0479">Metal-binding</keyword>
<keyword id="KW-0964">Secreted</keyword>
<keyword id="KW-0732">Signal</keyword>
<keyword id="KW-0800">Toxin</keyword>
<accession>D0UGJ0</accession>
<proteinExistence type="evidence at protein level"/>
<protein>
    <recommendedName>
        <fullName>Acidic phospholipase A2 BpPLA2-TXI</fullName>
        <shortName>svPLA2</shortName>
        <ecNumber>3.1.1.4</ecNumber>
    </recommendedName>
    <alternativeName>
        <fullName>Phosphatidylcholine 2-acylhydrolase</fullName>
    </alternativeName>
</protein>
<name>PA2A_BOTPA</name>
<feature type="signal peptide" evidence="3">
    <location>
        <begin position="1"/>
        <end position="16"/>
    </location>
</feature>
<feature type="chain" id="PRO_0000423029" description="Acidic phospholipase A2 BpPLA2-TXI">
    <location>
        <begin position="17"/>
        <end position="139"/>
    </location>
</feature>
<feature type="active site" evidence="2">
    <location>
        <position position="63"/>
    </location>
</feature>
<feature type="binding site" evidence="1">
    <location>
        <position position="45"/>
    </location>
    <ligand>
        <name>Ca(2+)</name>
        <dbReference type="ChEBI" id="CHEBI:29108"/>
    </ligand>
</feature>
<feature type="binding site" evidence="1">
    <location>
        <position position="47"/>
    </location>
    <ligand>
        <name>Ca(2+)</name>
        <dbReference type="ChEBI" id="CHEBI:29108"/>
    </ligand>
</feature>
<feature type="binding site" evidence="1">
    <location>
        <position position="64"/>
    </location>
    <ligand>
        <name>Ca(2+)</name>
        <dbReference type="ChEBI" id="CHEBI:29108"/>
    </ligand>
</feature>
<feature type="disulfide bond" evidence="1">
    <location>
        <begin position="44"/>
        <end position="60"/>
    </location>
</feature>
<feature type="disulfide bond" evidence="1">
    <location>
        <begin position="65"/>
        <end position="139"/>
    </location>
</feature>
<feature type="disulfide bond" evidence="1">
    <location>
        <begin position="73"/>
        <end position="97"/>
    </location>
</feature>
<feature type="disulfide bond" evidence="1">
    <location>
        <begin position="91"/>
        <end position="102"/>
    </location>
</feature>
<reference key="1">
    <citation type="journal article" date="2012" name="J. Proteomics">
        <title>Combined snake venomics and venom gland transcriptomic analysis of Bothropoides pauloensis.</title>
        <authorList>
            <person name="Rodrigues R.S."/>
            <person name="Boldrini-Franca J."/>
            <person name="Fonseca F.P."/>
            <person name="de la Torre P."/>
            <person name="Henrique-Silva F."/>
            <person name="Sanz L."/>
            <person name="Calvete J.J."/>
            <person name="Rodrigues V.M."/>
        </authorList>
    </citation>
    <scope>NUCLEOTIDE SEQUENCE [MRNA]</scope>
    <scope>PROTEIN SEQUENCE OF 17-31</scope>
    <scope>IDENTIFICATION BY MASS SPECTROMETRY</scope>
    <source>
        <tissue>Venom</tissue>
        <tissue>Venom gland</tissue>
    </source>
</reference>
<evidence type="ECO:0000250" key="1"/>
<evidence type="ECO:0000255" key="2">
    <source>
        <dbReference type="PROSITE-ProRule" id="PRU10035"/>
    </source>
</evidence>
<evidence type="ECO:0000269" key="3">
    <source>
    </source>
</evidence>
<evidence type="ECO:0000305" key="4"/>
<comment type="function">
    <text evidence="1">PLA2 catalyzes the calcium-dependent hydrolysis of the 2-acyl groups in 3-sn-phosphoglycerides.</text>
</comment>
<comment type="catalytic activity">
    <reaction evidence="2">
        <text>a 1,2-diacyl-sn-glycero-3-phosphocholine + H2O = a 1-acyl-sn-glycero-3-phosphocholine + a fatty acid + H(+)</text>
        <dbReference type="Rhea" id="RHEA:15801"/>
        <dbReference type="ChEBI" id="CHEBI:15377"/>
        <dbReference type="ChEBI" id="CHEBI:15378"/>
        <dbReference type="ChEBI" id="CHEBI:28868"/>
        <dbReference type="ChEBI" id="CHEBI:57643"/>
        <dbReference type="ChEBI" id="CHEBI:58168"/>
        <dbReference type="EC" id="3.1.1.4"/>
    </reaction>
</comment>
<comment type="cofactor">
    <cofactor evidence="1">
        <name>Ca(2+)</name>
        <dbReference type="ChEBI" id="CHEBI:29108"/>
    </cofactor>
    <text evidence="1">Binds 1 Ca(2+) ion.</text>
</comment>
<comment type="subcellular location">
    <subcellularLocation>
        <location>Secreted</location>
    </subcellularLocation>
</comment>
<comment type="tissue specificity">
    <text>Expressed by the venom gland.</text>
</comment>
<comment type="similarity">
    <text evidence="4">Belongs to the phospholipase A2 family. Group II subfamily. D49 sub-subfamily.</text>
</comment>